<feature type="chain" id="PRO_0000080199" description="Chromobox protein homolog 1">
    <location>
        <begin position="1"/>
        <end position="185"/>
    </location>
</feature>
<feature type="domain" description="Chromo 1" evidence="3">
    <location>
        <begin position="21"/>
        <end position="79"/>
    </location>
</feature>
<feature type="domain" description="Chromo 2; shadow subtype" evidence="3">
    <location>
        <begin position="117"/>
        <end position="175"/>
    </location>
</feature>
<feature type="region of interest" description="Disordered" evidence="4">
    <location>
        <begin position="63"/>
        <end position="124"/>
    </location>
</feature>
<feature type="compositionally biased region" description="Basic and acidic residues" evidence="4">
    <location>
        <begin position="73"/>
        <end position="89"/>
    </location>
</feature>
<feature type="compositionally biased region" description="Basic and acidic residues" evidence="4">
    <location>
        <begin position="96"/>
        <end position="121"/>
    </location>
</feature>
<feature type="site" description="Interacts with the PxVxL motif of TRIM28/TIF1B" evidence="1">
    <location>
        <position position="16"/>
    </location>
</feature>
<feature type="site" description="Histone H3K9me2 binding" evidence="1">
    <location>
        <position position="21"/>
    </location>
</feature>
<feature type="site" description="Histone H3A7 binding" evidence="1">
    <location>
        <position position="23"/>
    </location>
</feature>
<feature type="site" description="Histone H3A7 binding" evidence="1">
    <location>
        <position position="40"/>
    </location>
</feature>
<feature type="site" description="Histone H3A7 binding" evidence="1">
    <location>
        <position position="42"/>
    </location>
</feature>
<feature type="site" description="Histone H3K9me2 binding" evidence="1">
    <location>
        <position position="42"/>
    </location>
</feature>
<feature type="site" description="Histone H3K9me2 binding" evidence="1">
    <location>
        <position position="45"/>
    </location>
</feature>
<feature type="site" description="Histone H3A7 binding" evidence="1">
    <location>
        <position position="58"/>
    </location>
</feature>
<feature type="site" description="Histone H3A7 binding" evidence="1">
    <location>
        <position position="60"/>
    </location>
</feature>
<feature type="site" description="Interacts with the PxVxL motif of TRIM28/TIF1B" evidence="1">
    <location>
        <position position="125"/>
    </location>
</feature>
<feature type="site" description="Interacts with the PxVxL motif of TRIM28/TIF1B" evidence="1">
    <location>
        <position position="126"/>
    </location>
</feature>
<feature type="site" description="Interacts with the PxVxL motif of TRIM28/TIF1B" evidence="1">
    <location>
        <position position="135"/>
    </location>
</feature>
<feature type="site" description="Interacts with the PxVxL motif of TRIM28/TIF1B" evidence="1">
    <location>
        <position position="146"/>
    </location>
</feature>
<feature type="site" description="Interacts with the PxVxL motif of TRIM28/TIF1B" evidence="1">
    <location>
        <position position="167"/>
    </location>
</feature>
<feature type="site" description="Interacts with the PxVxL motif of TRIM28/TIF1B" evidence="1">
    <location>
        <position position="168"/>
    </location>
</feature>
<feature type="site" description="Interacts with the PxVxL motif of TRIM28/TIF1B" evidence="1">
    <location>
        <position position="170"/>
    </location>
</feature>
<feature type="modified residue" description="Phosphoserine" evidence="21 22 23">
    <location>
        <position position="89"/>
    </location>
</feature>
<feature type="modified residue" description="Phosphoserine" evidence="22">
    <location>
        <position position="91"/>
    </location>
</feature>
<feature type="modified residue" description="Phosphoserine" evidence="22">
    <location>
        <position position="175"/>
    </location>
</feature>
<feature type="cross-link" description="Glycyl lysine isopeptide (Lys-Gly) (interchain with G-Cter in SUMO2)" evidence="24 25">
    <location>
        <position position="9"/>
    </location>
</feature>
<feature type="cross-link" description="Glycyl lysine isopeptide (Lys-Gly) (interchain with G-Cter in SUMO2)" evidence="25">
    <location>
        <position position="33"/>
    </location>
</feature>
<feature type="cross-link" description="Glycyl lysine isopeptide (Lys-Gly) (interchain with G-Cter in SUMO2)" evidence="25">
    <location>
        <position position="99"/>
    </location>
</feature>
<feature type="cross-link" description="Glycyl lysine isopeptide (Lys-Gly) (interchain with G-Cter in SUMO2)" evidence="25">
    <location>
        <position position="150"/>
    </location>
</feature>
<feature type="mutagenesis site" description="Abolishes homodimer formation and binding to EMSY." evidence="9">
    <original>I</original>
    <variation>E</variation>
    <location>
        <position position="161"/>
    </location>
</feature>
<feature type="strand" evidence="27">
    <location>
        <begin position="23"/>
        <end position="32"/>
    </location>
</feature>
<feature type="strand" evidence="27">
    <location>
        <begin position="35"/>
        <end position="42"/>
    </location>
</feature>
<feature type="helix" evidence="27">
    <location>
        <begin position="47"/>
        <end position="49"/>
    </location>
</feature>
<feature type="strand" evidence="27">
    <location>
        <begin position="51"/>
        <end position="54"/>
    </location>
</feature>
<feature type="helix" evidence="27">
    <location>
        <begin position="55"/>
        <end position="57"/>
    </location>
</feature>
<feature type="helix" evidence="27">
    <location>
        <begin position="61"/>
        <end position="68"/>
    </location>
</feature>
<feature type="helix" evidence="26">
    <location>
        <begin position="112"/>
        <end position="115"/>
    </location>
</feature>
<feature type="strand" evidence="26">
    <location>
        <begin position="119"/>
        <end position="128"/>
    </location>
</feature>
<feature type="strand" evidence="26">
    <location>
        <begin position="131"/>
        <end position="138"/>
    </location>
</feature>
<feature type="strand" evidence="26">
    <location>
        <begin position="145"/>
        <end position="148"/>
    </location>
</feature>
<feature type="helix" evidence="26">
    <location>
        <begin position="149"/>
        <end position="155"/>
    </location>
</feature>
<feature type="helix" evidence="26">
    <location>
        <begin position="157"/>
        <end position="165"/>
    </location>
</feature>
<feature type="strand" evidence="26">
    <location>
        <begin position="168"/>
        <end position="172"/>
    </location>
</feature>
<protein>
    <recommendedName>
        <fullName>Chromobox protein homolog 1</fullName>
    </recommendedName>
    <alternativeName>
        <fullName>HP1Hsbeta</fullName>
    </alternativeName>
    <alternativeName>
        <fullName>Heterochromatin protein 1 homolog beta</fullName>
        <shortName>HP1 beta</shortName>
    </alternativeName>
    <alternativeName>
        <fullName>Heterochromatin protein p25</fullName>
    </alternativeName>
    <alternativeName>
        <fullName>M31</fullName>
    </alternativeName>
    <alternativeName>
        <fullName>Modifier 1 protein</fullName>
    </alternativeName>
    <alternativeName>
        <fullName>p25beta</fullName>
    </alternativeName>
</protein>
<reference key="1">
    <citation type="journal article" date="1997" name="Chromosoma">
        <title>Heterochromatin protein HP1Hsbeta (p25beta) and its localization with centromeres in mitosis.</title>
        <authorList>
            <person name="Furuta K."/>
            <person name="Chan E.K.L."/>
            <person name="Kiyosawa K."/>
            <person name="Reimer G."/>
            <person name="Luderschmidt C."/>
            <person name="Tan E.M."/>
        </authorList>
    </citation>
    <scope>NUCLEOTIDE SEQUENCE [MRNA]</scope>
    <scope>SUBCELLULAR LOCATION</scope>
    <source>
        <tissue>Liver tumor</tissue>
    </source>
</reference>
<reference key="2">
    <citation type="journal article" date="2004" name="Genome Res.">
        <title>The status, quality, and expansion of the NIH full-length cDNA project: the Mammalian Gene Collection (MGC).</title>
        <authorList>
            <consortium name="The MGC Project Team"/>
        </authorList>
    </citation>
    <scope>NUCLEOTIDE SEQUENCE [LARGE SCALE MRNA]</scope>
    <source>
        <tissue>Brain</tissue>
        <tissue>Ovary</tissue>
    </source>
</reference>
<reference key="3">
    <citation type="submission" date="2008-12" db="UniProtKB">
        <authorList>
            <person name="Lubec G."/>
            <person name="Afjehi-Sadat L."/>
            <person name="Chen W.-Q."/>
            <person name="Sun Y."/>
        </authorList>
    </citation>
    <scope>PROTEIN SEQUENCE OF 8-25; 122-137; 140-150 AND 156-167</scope>
    <scope>IDENTIFICATION BY MASS SPECTROMETRY</scope>
    <source>
        <tissue>Brain</tissue>
        <tissue>Cajal-Retzius cell</tissue>
        <tissue>Fetal brain cortex</tissue>
    </source>
</reference>
<reference key="4">
    <citation type="journal article" date="1999" name="Chromosoma">
        <title>Localization and phosphorylation of HP1 proteins during the cell cycle in mammalian cells.</title>
        <authorList>
            <person name="Minc E."/>
            <person name="Allory Y."/>
            <person name="Worman H.J."/>
            <person name="Courvalin J.-C."/>
            <person name="Buendia B."/>
        </authorList>
    </citation>
    <scope>SUBCELLULAR LOCATION</scope>
    <scope>LACK OF PHOSPHORYLATION</scope>
</reference>
<reference key="5">
    <citation type="journal article" date="1999" name="EMBO J.">
        <title>Functional mammalian homologues of the Drosophila PEV-modifier Su(var)3-9 encode centromere-associated proteins which complex with the heterochromatin component M31.</title>
        <authorList>
            <person name="Aagaard L."/>
            <person name="Laible G."/>
            <person name="Selenko P."/>
            <person name="Schmid M."/>
            <person name="Dorn R."/>
            <person name="Schotta G."/>
            <person name="Kuhfittig S."/>
            <person name="Wolf A."/>
            <person name="Lebersorger A."/>
            <person name="Singh P.B."/>
            <person name="Reuter G."/>
            <person name="Jenuwein T."/>
        </authorList>
    </citation>
    <scope>INTERACTION WITH SUV39H1</scope>
</reference>
<reference key="6">
    <citation type="journal article" date="2003" name="Cell">
        <title>EMSY links the BRCA2 pathway to sporadic breast and ovarian cancer.</title>
        <authorList>
            <person name="Hughes-Davies L."/>
            <person name="Huntsman D."/>
            <person name="Ruas M."/>
            <person name="Fuks F."/>
            <person name="Bye J."/>
            <person name="Chin S.-F."/>
            <person name="Milner J."/>
            <person name="Brown L.A."/>
            <person name="Hsu F."/>
            <person name="Gilks B."/>
            <person name="Nielsen T."/>
            <person name="Schulzer M."/>
            <person name="Chia S."/>
            <person name="Ragaz J."/>
            <person name="Cahn A."/>
            <person name="Linger L."/>
            <person name="Ozdag H."/>
            <person name="Cattaneo E."/>
            <person name="Jordanova E.S."/>
            <person name="Schuuring E."/>
            <person name="Yu D.S."/>
            <person name="Venkitaraman A."/>
            <person name="Ponder B."/>
            <person name="Doherty A."/>
            <person name="Aparicio S."/>
            <person name="Bentley D."/>
            <person name="Theillet C."/>
            <person name="Ponting C.P."/>
            <person name="Caldas C."/>
            <person name="Kouzarides T."/>
        </authorList>
    </citation>
    <scope>INTERACTION WITH EMSY</scope>
</reference>
<reference key="7">
    <citation type="journal article" date="2005" name="EMBO Rep.">
        <title>Binding of EMSY to HP1beta: implications for recruitment of HP1beta and BS69.</title>
        <authorList>
            <person name="Ekblad C.M.S."/>
            <person name="Chavali G.B."/>
            <person name="Basu B.P."/>
            <person name="Freund S.M.V."/>
            <person name="Veprintsev D."/>
            <person name="Hughes-Davies L."/>
            <person name="Kouzarides T."/>
            <person name="Doherty A.J."/>
            <person name="Itzhaki L.S."/>
        </authorList>
    </citation>
    <scope>MUTAGENESIS OF ILE-161</scope>
</reference>
<reference key="8">
    <citation type="journal article" date="2005" name="Mol. Cell. Biol.">
        <title>In vivo HP1 targeting causes large-scale chromatin condensation and enhanced histone lysine methylation.</title>
        <authorList>
            <person name="Verschure P.J."/>
            <person name="van der Kraan I."/>
            <person name="de Leeuw W."/>
            <person name="van der Vlag J."/>
            <person name="Carpenter A.E."/>
            <person name="Belmont A.S."/>
            <person name="van Driel R."/>
        </authorList>
    </citation>
    <scope>INTERACTION WITH SETDB1</scope>
</reference>
<reference key="9">
    <citation type="journal article" date="2008" name="Proteomics">
        <title>Large-scale phosphoproteome analysis of human liver tissue by enrichment and fractionation of phosphopeptides with strong anion exchange chromatography.</title>
        <authorList>
            <person name="Han G."/>
            <person name="Ye M."/>
            <person name="Zhou H."/>
            <person name="Jiang X."/>
            <person name="Feng S."/>
            <person name="Jiang X."/>
            <person name="Tian R."/>
            <person name="Wan D."/>
            <person name="Zou H."/>
            <person name="Gu J."/>
        </authorList>
    </citation>
    <scope>IDENTIFICATION BY MASS SPECTROMETRY [LARGE SCALE ANALYSIS]</scope>
    <source>
        <tissue>Liver</tissue>
    </source>
</reference>
<reference key="10">
    <citation type="journal article" date="2010" name="Cell">
        <title>Quantitative interaction proteomics and genome-wide profiling of epigenetic histone marks and their readers.</title>
        <authorList>
            <person name="Vermeulen M."/>
            <person name="Eberl H.C."/>
            <person name="Matarese F."/>
            <person name="Marks H."/>
            <person name="Denissov S."/>
            <person name="Butter F."/>
            <person name="Lee K.K."/>
            <person name="Olsen J.V."/>
            <person name="Hyman A.A."/>
            <person name="Stunnenberg H.G."/>
            <person name="Mann M."/>
        </authorList>
    </citation>
    <scope>INTERACTION WITH CHAMP1 AND POGZ</scope>
</reference>
<reference key="11">
    <citation type="journal article" date="2010" name="J. Biol. Chem.">
        <title>ASXL1 represses retinoic acid receptor-mediated transcription through associating with HP1 and LSD1.</title>
        <authorList>
            <person name="Lee S.W."/>
            <person name="Cho Y.S."/>
            <person name="Na J.M."/>
            <person name="Park U.H."/>
            <person name="Kang M."/>
            <person name="Kim E.J."/>
            <person name="Um S.J."/>
        </authorList>
    </citation>
    <scope>RETRACTED PAPER</scope>
</reference>
<reference key="12">
    <citation type="journal article" date="2015" name="J. Biol. Chem.">
        <title>Retraction: 'ASXL1 represses retinoic acid receptor-mediated transcription through associating with HP1 and LSD1'.</title>
        <authorList>
            <person name="Lee S.W."/>
            <person name="Cho Y.S."/>
            <person name="Na J.M."/>
            <person name="Park U.H."/>
            <person name="Kang M."/>
            <person name="Kim E.J."/>
            <person name="Um S.J."/>
        </authorList>
    </citation>
    <scope>RETRACTION NOTICE OF PUBMED:19880879</scope>
</reference>
<reference key="13">
    <citation type="journal article" date="2010" name="Nat. Cell Biol.">
        <title>Human POGZ modulates dissociation of HP1alpha from mitotic chromosome arms through Aurora B activation.</title>
        <authorList>
            <person name="Nozawa R.S."/>
            <person name="Nagao K."/>
            <person name="Masuda H.T."/>
            <person name="Iwasaki O."/>
            <person name="Hirota T."/>
            <person name="Nozaki N."/>
            <person name="Kimura H."/>
            <person name="Obuse C."/>
        </authorList>
    </citation>
    <scope>INTERACTION WITH POGZ</scope>
</reference>
<reference key="14">
    <citation type="journal article" date="2010" name="PLoS ONE">
        <title>Lamin A rod domain mutants target heterochromatin protein 1alpha and beta for proteasomal degradation by activation of F-box protein, FBXW10.</title>
        <authorList>
            <person name="Chaturvedi P."/>
            <person name="Parnaik V.K."/>
        </authorList>
    </citation>
    <scope>UBIQUITINATION</scope>
</reference>
<reference key="15">
    <citation type="journal article" date="2010" name="Sci. Signal.">
        <title>Quantitative phosphoproteomics reveals widespread full phosphorylation site occupancy during mitosis.</title>
        <authorList>
            <person name="Olsen J.V."/>
            <person name="Vermeulen M."/>
            <person name="Santamaria A."/>
            <person name="Kumar C."/>
            <person name="Miller M.L."/>
            <person name="Jensen L.J."/>
            <person name="Gnad F."/>
            <person name="Cox J."/>
            <person name="Jensen T.S."/>
            <person name="Nigg E.A."/>
            <person name="Brunak S."/>
            <person name="Mann M."/>
        </authorList>
    </citation>
    <scope>PHOSPHORYLATION [LARGE SCALE ANALYSIS] AT SER-89</scope>
    <scope>IDENTIFICATION BY MASS SPECTROMETRY [LARGE SCALE ANALYSIS]</scope>
    <source>
        <tissue>Cervix carcinoma</tissue>
    </source>
</reference>
<reference key="16">
    <citation type="journal article" date="2011" name="BMC Syst. Biol.">
        <title>Initial characterization of the human central proteome.</title>
        <authorList>
            <person name="Burkard T.R."/>
            <person name="Planyavsky M."/>
            <person name="Kaupe I."/>
            <person name="Breitwieser F.P."/>
            <person name="Buerckstuemmer T."/>
            <person name="Bennett K.L."/>
            <person name="Superti-Furga G."/>
            <person name="Colinge J."/>
        </authorList>
    </citation>
    <scope>IDENTIFICATION BY MASS SPECTROMETRY [LARGE SCALE ANALYSIS]</scope>
</reference>
<reference key="17">
    <citation type="journal article" date="2011" name="Sci. Signal.">
        <title>System-wide temporal characterization of the proteome and phosphoproteome of human embryonic stem cell differentiation.</title>
        <authorList>
            <person name="Rigbolt K.T."/>
            <person name="Prokhorova T.A."/>
            <person name="Akimov V."/>
            <person name="Henningsen J."/>
            <person name="Johansen P.T."/>
            <person name="Kratchmarova I."/>
            <person name="Kassem M."/>
            <person name="Mann M."/>
            <person name="Olsen J.V."/>
            <person name="Blagoev B."/>
        </authorList>
    </citation>
    <scope>PHOSPHORYLATION [LARGE SCALE ANALYSIS] AT SER-89; SER-91 AND SER-175</scope>
    <scope>IDENTIFICATION BY MASS SPECTROMETRY [LARGE SCALE ANALYSIS]</scope>
</reference>
<reference key="18">
    <citation type="journal article" date="2013" name="J. Proteome Res.">
        <title>Toward a comprehensive characterization of a human cancer cell phosphoproteome.</title>
        <authorList>
            <person name="Zhou H."/>
            <person name="Di Palma S."/>
            <person name="Preisinger C."/>
            <person name="Peng M."/>
            <person name="Polat A.N."/>
            <person name="Heck A.J."/>
            <person name="Mohammed S."/>
        </authorList>
    </citation>
    <scope>IDENTIFICATION BY MASS SPECTROMETRY [LARGE SCALE ANALYSIS]</scope>
    <source>
        <tissue>Erythroleukemia</tissue>
    </source>
</reference>
<reference key="19">
    <citation type="journal article" date="2013" name="Nat. Struct. Mol. Biol.">
        <title>Human inactive X chromosome is compacted through a PRC2-independent SMCHD1-HBiX1 pathway.</title>
        <authorList>
            <person name="Nozawa R.S."/>
            <person name="Nagao K."/>
            <person name="Igami K.T."/>
            <person name="Shibata S."/>
            <person name="Shirai N."/>
            <person name="Nozaki N."/>
            <person name="Sado T."/>
            <person name="Kimura H."/>
            <person name="Obuse C."/>
        </authorList>
    </citation>
    <scope>INTERACTION WITH LRIF1</scope>
</reference>
<reference key="20">
    <citation type="journal article" date="2014" name="J. Proteomics">
        <title>An enzyme assisted RP-RPLC approach for in-depth analysis of human liver phosphoproteome.</title>
        <authorList>
            <person name="Bian Y."/>
            <person name="Song C."/>
            <person name="Cheng K."/>
            <person name="Dong M."/>
            <person name="Wang F."/>
            <person name="Huang J."/>
            <person name="Sun D."/>
            <person name="Wang L."/>
            <person name="Ye M."/>
            <person name="Zou H."/>
        </authorList>
    </citation>
    <scope>PHOSPHORYLATION [LARGE SCALE ANALYSIS] AT SER-89</scope>
    <scope>IDENTIFICATION BY MASS SPECTROMETRY [LARGE SCALE ANALYSIS]</scope>
    <source>
        <tissue>Liver</tissue>
    </source>
</reference>
<reference key="21">
    <citation type="journal article" date="2015" name="Mol. Cell. Proteomics">
        <title>System-wide analysis of SUMOylation dynamics in response to replication stress reveals novel small ubiquitin-like modified target proteins and acceptor lysines relevant for genome stability.</title>
        <authorList>
            <person name="Xiao Z."/>
            <person name="Chang J.G."/>
            <person name="Hendriks I.A."/>
            <person name="Sigurdsson J.O."/>
            <person name="Olsen J.V."/>
            <person name="Vertegaal A.C."/>
        </authorList>
    </citation>
    <scope>SUMOYLATION [LARGE SCALE ANALYSIS] AT LYS-9</scope>
    <scope>IDENTIFICATION BY MASS SPECTROMETRY [LARGE SCALE ANALYSIS]</scope>
</reference>
<reference key="22">
    <citation type="journal article" date="2016" name="Nucleic Acids Res.">
        <title>Hepatoma-derived growth factor-related protein 2 promotes DNA repair by homologous recombination.</title>
        <authorList>
            <person name="Baude A."/>
            <person name="Aaes T.L."/>
            <person name="Zhai B."/>
            <person name="Al-Nakouzi N."/>
            <person name="Oo H.Z."/>
            <person name="Daugaard M."/>
            <person name="Rohde M."/>
            <person name="Jaeaettelae M."/>
        </authorList>
    </citation>
    <scope>INTERACTION WITH HDGFL2</scope>
</reference>
<reference key="23">
    <citation type="journal article" date="2017" name="Nat. Struct. Mol. Biol.">
        <title>Site-specific mapping of the human SUMO proteome reveals co-modification with phosphorylation.</title>
        <authorList>
            <person name="Hendriks I.A."/>
            <person name="Lyon D."/>
            <person name="Young C."/>
            <person name="Jensen L.J."/>
            <person name="Vertegaal A.C."/>
            <person name="Nielsen M.L."/>
        </authorList>
    </citation>
    <scope>SUMOYLATION [LARGE SCALE ANALYSIS] AT LYS-9; LYS-33; LYS-99 AND LYS-150</scope>
    <scope>IDENTIFICATION BY MASS SPECTROMETRY [LARGE SCALE ANALYSIS]</scope>
</reference>
<reference key="24">
    <citation type="journal article" date="2017" name="Nucleic Acids Res.">
        <title>CHD3 and CHD4 form distinct NuRD complexes with different yet overlapping functionality.</title>
        <authorList>
            <person name="Hoffmeister H."/>
            <person name="Fuchs A."/>
            <person name="Erdel F."/>
            <person name="Pinz S."/>
            <person name="Groebner-Ferreira R."/>
            <person name="Bruckmann A."/>
            <person name="Deutzmann R."/>
            <person name="Schwartz U."/>
            <person name="Maldonado R."/>
            <person name="Huber C."/>
            <person name="Dendorfer A.S."/>
            <person name="Rippe K."/>
            <person name="Laengst G."/>
        </authorList>
    </citation>
    <scope>INTERACTION WITH CHD3 AND CHD4</scope>
    <scope>IDENTIFICATION BY MASS SPECTROMETRY</scope>
    <scope>SUBCELLULAR LOCATION</scope>
</reference>
<reference key="25">
    <citation type="journal article" date="2006" name="Structure">
        <title>Crystal structure of the HP1-EMSY complex reveals an unusual mode of HP1 binding.</title>
        <authorList>
            <person name="Huang Y."/>
            <person name="Myers M.P."/>
            <person name="Xu R.-M."/>
        </authorList>
    </citation>
    <scope>X-RAY CRYSTALLOGRAPHY (1.8 ANGSTROMS) OF 104-175 IN COMPLEX WITH EMSY</scope>
</reference>
<reference key="26">
    <citation type="journal article" date="2011" name="Mol. Biol. Cell">
        <title>Mitotic centromeric targeting of HP1 and its binding to Sgo1 are dispensable for sister-chromatid cohesion in human cells.</title>
        <authorList>
            <person name="Kang J."/>
            <person name="Chaudhary J."/>
            <person name="Dong H."/>
            <person name="Kim S."/>
            <person name="Brautigam C.A."/>
            <person name="Yu H."/>
        </authorList>
    </citation>
    <scope>X-RAY CRYSTALLOGRAPHY (1.93 ANGSTROMS) OF 108-185 IN COMPLEX WITH SGO1</scope>
    <scope>INTERACTION WITH INCENP</scope>
</reference>
<evidence type="ECO:0000250" key="1"/>
<evidence type="ECO:0000250" key="2">
    <source>
        <dbReference type="UniProtKB" id="P83917"/>
    </source>
</evidence>
<evidence type="ECO:0000255" key="3">
    <source>
        <dbReference type="PROSITE-ProRule" id="PRU00053"/>
    </source>
</evidence>
<evidence type="ECO:0000256" key="4">
    <source>
        <dbReference type="SAM" id="MobiDB-lite"/>
    </source>
</evidence>
<evidence type="ECO:0000269" key="5">
    <source>
    </source>
</evidence>
<evidence type="ECO:0000269" key="6">
    <source>
    </source>
</evidence>
<evidence type="ECO:0000269" key="7">
    <source>
    </source>
</evidence>
<evidence type="ECO:0000269" key="8">
    <source>
    </source>
</evidence>
<evidence type="ECO:0000269" key="9">
    <source>
    </source>
</evidence>
<evidence type="ECO:0000269" key="10">
    <source>
    </source>
</evidence>
<evidence type="ECO:0000269" key="11">
    <source>
    </source>
</evidence>
<evidence type="ECO:0000269" key="12">
    <source>
    </source>
</evidence>
<evidence type="ECO:0000269" key="13">
    <source>
    </source>
</evidence>
<evidence type="ECO:0000269" key="14">
    <source>
    </source>
</evidence>
<evidence type="ECO:0000269" key="15">
    <source>
    </source>
</evidence>
<evidence type="ECO:0000269" key="16">
    <source>
    </source>
</evidence>
<evidence type="ECO:0000269" key="17">
    <source>
    </source>
</evidence>
<evidence type="ECO:0000269" key="18">
    <source>
    </source>
</evidence>
<evidence type="ECO:0000305" key="19">
    <source>
    </source>
</evidence>
<evidence type="ECO:0000305" key="20">
    <source>
    </source>
</evidence>
<evidence type="ECO:0007744" key="21">
    <source>
    </source>
</evidence>
<evidence type="ECO:0007744" key="22">
    <source>
    </source>
</evidence>
<evidence type="ECO:0007744" key="23">
    <source>
    </source>
</evidence>
<evidence type="ECO:0007744" key="24">
    <source>
    </source>
</evidence>
<evidence type="ECO:0007744" key="25">
    <source>
    </source>
</evidence>
<evidence type="ECO:0007829" key="26">
    <source>
        <dbReference type="PDB" id="2FMM"/>
    </source>
</evidence>
<evidence type="ECO:0007829" key="27">
    <source>
        <dbReference type="PDB" id="3F2U"/>
    </source>
</evidence>
<keyword id="KW-0002">3D-structure</keyword>
<keyword id="KW-0903">Direct protein sequencing</keyword>
<keyword id="KW-1017">Isopeptide bond</keyword>
<keyword id="KW-0539">Nucleus</keyword>
<keyword id="KW-0597">Phosphoprotein</keyword>
<keyword id="KW-1267">Proteomics identification</keyword>
<keyword id="KW-1185">Reference proteome</keyword>
<keyword id="KW-0677">Repeat</keyword>
<keyword id="KW-0832">Ubl conjugation</keyword>
<sequence>MGKKQNKKKVEEVLEEEEEEYVVEKVLDRRVVKGKVEYLLKWKGFSDEDNTWEPEENLDCPDLIAEFLQSQKTAHETDKSEGGKRKADSDSEDKGEESKPKKKKEESEKPRGFARGLEPERIIGATDSSGELMFLMKWKNSDEADLVPAKEANVKCPQVVISFYEERLTWHSYPSEDDDKKDDKN</sequence>
<comment type="function">
    <text evidence="2">Component of heterochromatin. Recognizes and binds histone H3 tails methylated at 'Lys-9', leading to epigenetic repression. Interaction with lamin B receptor (LBR) can contribute to the association of the heterochromatin with the inner nuclear membrane.</text>
</comment>
<comment type="subunit">
    <text evidence="2 5 7 8 10 12 13 14 15 16 17">Homodimer (By similarity). Interacts directly with CHAF1A, EMSY, LBR, TIF1/TIF1A and TRIM28/TIF1B PXVXL motif via the chromoshadow domain (PubMed:14651845, PubMed:16615912). Interacts directly with histone H3 methylated at 'Lys-9' via the chromo domain (By similarity). Interacts with SUV39H1 and SETDB1, KMT5B and KMT5C (PubMed:10202156, PubMed:15899859). Interacts with PRDM6 (By similarity). Interacts with POGZ (PubMed:20562864, PubMed:20850016). Interacts with CHAMP1 (PubMed:20850016). Interacts with INCENP (PubMed:21346195). Interacts with SGO1; the CBX1 homodimer binds to one molecule of SGO1 (PubMed:21346195). Interacts with LRIF1 (via PxVxL motif) (PubMed:23542155). Interacts with HDGFL2 (PubMed:26721387). Interacts with CHD3 (PubMed:28977666). Interacts with CHD4 (PubMed:28977666).</text>
</comment>
<comment type="interaction">
    <interactant intactId="EBI-78129">
        <id>P83916</id>
    </interactant>
    <interactant intactId="EBI-1764854">
        <id>Q9H2P0</id>
        <label>ADNP</label>
    </interactant>
    <organismsDiffer>false</organismsDiffer>
    <experiments>5</experiments>
</comment>
<comment type="interaction">
    <interactant intactId="EBI-78129">
        <id>P83916</id>
    </interactant>
    <interactant intactId="EBI-2838654">
        <id>Q6IQ32</id>
        <label>ADNP2</label>
    </interactant>
    <organismsDiffer>false</organismsDiffer>
    <experiments>6</experiments>
</comment>
<comment type="interaction">
    <interactant intactId="EBI-78129">
        <id>P83916</id>
    </interactant>
    <interactant intactId="EBI-77613">
        <id>P05067</id>
        <label>APP</label>
    </interactant>
    <organismsDiffer>false</organismsDiffer>
    <experiments>6</experiments>
</comment>
<comment type="interaction">
    <interactant intactId="EBI-78129">
        <id>P83916</id>
    </interactant>
    <interactant intactId="EBI-742750">
        <id>Q8TBE0</id>
        <label>BAHD1</label>
    </interactant>
    <organismsDiffer>false</organismsDiffer>
    <experiments>3</experiments>
</comment>
<comment type="interaction">
    <interactant intactId="EBI-78129">
        <id>P83916</id>
    </interactant>
    <interactant intactId="EBI-7132379">
        <id>P43681</id>
        <label>CHRNA4</label>
    </interactant>
    <organismsDiffer>false</organismsDiffer>
    <experiments>3</experiments>
</comment>
<comment type="interaction">
    <interactant intactId="EBI-78129">
        <id>P83916</id>
    </interactant>
    <interactant intactId="EBI-10968534">
        <id>P50570-2</id>
        <label>DNM2</label>
    </interactant>
    <organismsDiffer>false</organismsDiffer>
    <experiments>3</experiments>
</comment>
<comment type="interaction">
    <interactant intactId="EBI-78129">
        <id>P83916</id>
    </interactant>
    <interactant intactId="EBI-6598631">
        <id>Q7Z589</id>
        <label>EMSY</label>
    </interactant>
    <organismsDiffer>false</organismsDiffer>
    <experiments>3</experiments>
</comment>
<comment type="interaction">
    <interactant intactId="EBI-78129">
        <id>P83916</id>
    </interactant>
    <interactant intactId="EBI-515315">
        <id>P06241</id>
        <label>FYN</label>
    </interactant>
    <organismsDiffer>false</organismsDiffer>
    <experiments>3</experiments>
</comment>
<comment type="interaction">
    <interactant intactId="EBI-78129">
        <id>P83916</id>
    </interactant>
    <interactant intactId="EBI-79722">
        <id>P68431</id>
        <label>H3C12</label>
    </interactant>
    <organismsDiffer>false</organismsDiffer>
    <experiments>12</experiments>
</comment>
<comment type="interaction">
    <interactant intactId="EBI-78129">
        <id>P83916</id>
    </interactant>
    <interactant intactId="EBI-466029">
        <id>P42858</id>
        <label>HTT</label>
    </interactant>
    <organismsDiffer>false</organismsDiffer>
    <experiments>15</experiments>
</comment>
<comment type="interaction">
    <interactant intactId="EBI-78129">
        <id>P83916</id>
    </interactant>
    <interactant intactId="EBI-725647">
        <id>Q99732</id>
        <label>LITAF</label>
    </interactant>
    <organismsDiffer>false</organismsDiffer>
    <experiments>3</experiments>
</comment>
<comment type="interaction">
    <interactant intactId="EBI-78129">
        <id>P83916</id>
    </interactant>
    <interactant intactId="EBI-739832">
        <id>Q8TBB1</id>
        <label>LNX1</label>
    </interactant>
    <organismsDiffer>false</organismsDiffer>
    <experiments>3</experiments>
</comment>
<comment type="interaction">
    <interactant intactId="EBI-78129">
        <id>P83916</id>
    </interactant>
    <interactant intactId="EBI-2681496">
        <id>P10588</id>
        <label>NR2F6</label>
    </interactant>
    <organismsDiffer>false</organismsDiffer>
    <experiments>2</experiments>
</comment>
<comment type="interaction">
    <interactant intactId="EBI-78129">
        <id>P83916</id>
    </interactant>
    <interactant intactId="EBI-989069">
        <id>Q5FBB7</id>
        <label>SGO1</label>
    </interactant>
    <organismsDiffer>false</organismsDiffer>
    <experiments>2</experiments>
</comment>
<comment type="interaction">
    <interactant intactId="EBI-78129">
        <id>P83916</id>
    </interactant>
    <interactant intactId="EBI-1171329">
        <id>Q92673</id>
        <label>SORL1</label>
    </interactant>
    <organismsDiffer>false</organismsDiffer>
    <experiments>3</experiments>
</comment>
<comment type="interaction">
    <interactant intactId="EBI-78129">
        <id>P83916</id>
    </interactant>
    <interactant intactId="EBI-6589365">
        <id>P23497-2</id>
        <label>SP100</label>
    </interactant>
    <organismsDiffer>false</organismsDiffer>
    <experiments>3</experiments>
</comment>
<comment type="interaction">
    <interactant intactId="EBI-78129">
        <id>P83916</id>
    </interactant>
    <interactant intactId="EBI-349968">
        <id>O43463</id>
        <label>SUV39H1</label>
    </interactant>
    <organismsDiffer>false</organismsDiffer>
    <experiments>6</experiments>
</comment>
<comment type="interaction">
    <interactant intactId="EBI-78129">
        <id>P83916</id>
    </interactant>
    <interactant intactId="EBI-714860">
        <id>P09936</id>
        <label>UCHL1</label>
    </interactant>
    <organismsDiffer>false</organismsDiffer>
    <experiments>4</experiments>
</comment>
<comment type="interaction">
    <interactant intactId="EBI-78129">
        <id>P83916</id>
    </interactant>
    <interactant intactId="EBI-8831272">
        <id>Q8ND82</id>
        <label>ZNF280C</label>
    </interactant>
    <organismsDiffer>false</organismsDiffer>
    <experiments>5</experiments>
</comment>
<comment type="subcellular location">
    <subcellularLocation>
        <location evidence="6 17 18">Nucleus</location>
    </subcellularLocation>
    <text>Unassociated with chromosomes during mitosis.</text>
</comment>
<comment type="tissue specificity">
    <text>Expressed in all adult and embryonic tissues.</text>
</comment>
<comment type="PTM">
    <text>Not phosphorylated.</text>
</comment>
<comment type="PTM">
    <text evidence="11">Ubiquitinated.</text>
</comment>
<comment type="caution">
    <text evidence="19 20">Was previously reported to interact with ASXL1. However, this publication has been retracted.</text>
</comment>
<comment type="online information" name="Wikipedia">
    <link uri="https://en.wikipedia.org/wiki/Heterochromatin_Protein_1"/>
    <text>Heterochromatin protein 1 entry</text>
</comment>
<name>CBX1_HUMAN</name>
<proteinExistence type="evidence at protein level"/>
<organism>
    <name type="scientific">Homo sapiens</name>
    <name type="common">Human</name>
    <dbReference type="NCBI Taxonomy" id="9606"/>
    <lineage>
        <taxon>Eukaryota</taxon>
        <taxon>Metazoa</taxon>
        <taxon>Chordata</taxon>
        <taxon>Craniata</taxon>
        <taxon>Vertebrata</taxon>
        <taxon>Euteleostomi</taxon>
        <taxon>Mammalia</taxon>
        <taxon>Eutheria</taxon>
        <taxon>Euarchontoglires</taxon>
        <taxon>Primates</taxon>
        <taxon>Haplorrhini</taxon>
        <taxon>Catarrhini</taxon>
        <taxon>Hominidae</taxon>
        <taxon>Homo</taxon>
    </lineage>
</organism>
<accession>P83916</accession>
<accession>P23197</accession>
<dbReference type="EMBL" id="U35451">
    <property type="protein sequence ID" value="AAB81548.1"/>
    <property type="molecule type" value="mRNA"/>
</dbReference>
<dbReference type="EMBL" id="BC002609">
    <property type="protein sequence ID" value="AAH02609.1"/>
    <property type="molecule type" value="mRNA"/>
</dbReference>
<dbReference type="EMBL" id="BC021302">
    <property type="protein sequence ID" value="AAH21302.1"/>
    <property type="molecule type" value="mRNA"/>
</dbReference>
<dbReference type="CCDS" id="CCDS11525.1"/>
<dbReference type="PIR" id="G02080">
    <property type="entry name" value="G02080"/>
</dbReference>
<dbReference type="RefSeq" id="NP_001120700.1">
    <property type="nucleotide sequence ID" value="NM_001127228.2"/>
</dbReference>
<dbReference type="RefSeq" id="NP_006798.1">
    <property type="nucleotide sequence ID" value="NM_006807.5"/>
</dbReference>
<dbReference type="PDB" id="2FMM">
    <property type="method" value="X-ray"/>
    <property type="resolution" value="1.80 A"/>
    <property type="chains" value="A/B/C/D=104-175"/>
</dbReference>
<dbReference type="PDB" id="3F2U">
    <property type="method" value="X-ray"/>
    <property type="resolution" value="1.80 A"/>
    <property type="chains" value="A=20-73"/>
</dbReference>
<dbReference type="PDB" id="3Q6S">
    <property type="method" value="X-ray"/>
    <property type="resolution" value="1.93 A"/>
    <property type="chains" value="A/B/C/D=108-185"/>
</dbReference>
<dbReference type="PDB" id="5T1G">
    <property type="method" value="X-ray"/>
    <property type="resolution" value="1.90 A"/>
    <property type="chains" value="A=108-185"/>
</dbReference>
<dbReference type="PDB" id="6D07">
    <property type="method" value="X-ray"/>
    <property type="resolution" value="2.10 A"/>
    <property type="chains" value="A/B=20-73"/>
</dbReference>
<dbReference type="PDB" id="6D08">
    <property type="method" value="X-ray"/>
    <property type="resolution" value="2.10 A"/>
    <property type="chains" value="A/B=20-73"/>
</dbReference>
<dbReference type="PDBsum" id="2FMM"/>
<dbReference type="PDBsum" id="3F2U"/>
<dbReference type="PDBsum" id="3Q6S"/>
<dbReference type="PDBsum" id="5T1G"/>
<dbReference type="PDBsum" id="6D07"/>
<dbReference type="PDBsum" id="6D08"/>
<dbReference type="SMR" id="P83916"/>
<dbReference type="BioGRID" id="116151">
    <property type="interactions" value="274"/>
</dbReference>
<dbReference type="DIP" id="DIP-28135N"/>
<dbReference type="FunCoup" id="P83916">
    <property type="interactions" value="2626"/>
</dbReference>
<dbReference type="IntAct" id="P83916">
    <property type="interactions" value="206"/>
</dbReference>
<dbReference type="MINT" id="P83916"/>
<dbReference type="STRING" id="9606.ENSP00000377060"/>
<dbReference type="BindingDB" id="P83916"/>
<dbReference type="ChEMBL" id="CHEMBL1741193"/>
<dbReference type="GlyGen" id="P83916">
    <property type="glycosylation" value="1 site, 1 O-linked glycan (1 site)"/>
</dbReference>
<dbReference type="iPTMnet" id="P83916"/>
<dbReference type="MetOSite" id="P83916"/>
<dbReference type="PhosphoSitePlus" id="P83916"/>
<dbReference type="SwissPalm" id="P83916"/>
<dbReference type="BioMuta" id="CBX1"/>
<dbReference type="DMDM" id="48428808"/>
<dbReference type="jPOST" id="P83916"/>
<dbReference type="MassIVE" id="P83916"/>
<dbReference type="PaxDb" id="9606-ENSP00000377060"/>
<dbReference type="PeptideAtlas" id="P83916"/>
<dbReference type="ProteomicsDB" id="57742"/>
<dbReference type="Pumba" id="P83916"/>
<dbReference type="TopDownProteomics" id="P83916"/>
<dbReference type="ABCD" id="P83916">
    <property type="antibodies" value="5 sequenced antibodies"/>
</dbReference>
<dbReference type="Antibodypedia" id="3221">
    <property type="antibodies" value="365 antibodies from 39 providers"/>
</dbReference>
<dbReference type="DNASU" id="10951"/>
<dbReference type="Ensembl" id="ENST00000225603.9">
    <property type="protein sequence ID" value="ENSP00000225603.4"/>
    <property type="gene ID" value="ENSG00000108468.15"/>
</dbReference>
<dbReference type="Ensembl" id="ENST00000393408.7">
    <property type="protein sequence ID" value="ENSP00000377060.3"/>
    <property type="gene ID" value="ENSG00000108468.15"/>
</dbReference>
<dbReference type="GeneID" id="10951"/>
<dbReference type="KEGG" id="hsa:10951"/>
<dbReference type="MANE-Select" id="ENST00000225603.9">
    <property type="protein sequence ID" value="ENSP00000225603.4"/>
    <property type="RefSeq nucleotide sequence ID" value="NM_001127228.2"/>
    <property type="RefSeq protein sequence ID" value="NP_001120700.1"/>
</dbReference>
<dbReference type="AGR" id="HGNC:1551"/>
<dbReference type="CTD" id="10951"/>
<dbReference type="DisGeNET" id="10951"/>
<dbReference type="GeneCards" id="CBX1"/>
<dbReference type="HGNC" id="HGNC:1551">
    <property type="gene designation" value="CBX1"/>
</dbReference>
<dbReference type="HPA" id="ENSG00000108468">
    <property type="expression patterns" value="Low tissue specificity"/>
</dbReference>
<dbReference type="MIM" id="604511">
    <property type="type" value="gene"/>
</dbReference>
<dbReference type="neXtProt" id="NX_P83916"/>
<dbReference type="OpenTargets" id="ENSG00000108468"/>
<dbReference type="PharmGKB" id="PA26126"/>
<dbReference type="VEuPathDB" id="HostDB:ENSG00000108468"/>
<dbReference type="eggNOG" id="KOG1911">
    <property type="taxonomic scope" value="Eukaryota"/>
</dbReference>
<dbReference type="GeneTree" id="ENSGT00940000154152"/>
<dbReference type="HOGENOM" id="CLU_045874_1_0_1"/>
<dbReference type="InParanoid" id="P83916"/>
<dbReference type="OMA" id="KCPLKML"/>
<dbReference type="OrthoDB" id="433924at2759"/>
<dbReference type="PAN-GO" id="P83916">
    <property type="GO annotations" value="5 GO annotations based on evolutionary models"/>
</dbReference>
<dbReference type="PhylomeDB" id="P83916"/>
<dbReference type="TreeFam" id="TF350503"/>
<dbReference type="PathwayCommons" id="P83916"/>
<dbReference type="Reactome" id="R-HSA-9609690">
    <property type="pathway name" value="HCMV Early Events"/>
</dbReference>
<dbReference type="SignaLink" id="P83916"/>
<dbReference type="SIGNOR" id="P83916"/>
<dbReference type="BioGRID-ORCS" id="10951">
    <property type="hits" value="229 hits in 1128 CRISPR screens"/>
</dbReference>
<dbReference type="CD-CODE" id="8BB8BA7F">
    <property type="entry name" value="Synthetic Condensate 000324"/>
</dbReference>
<dbReference type="CD-CODE" id="8DF372A2">
    <property type="entry name" value="Synthetic Condensate 000069"/>
</dbReference>
<dbReference type="CD-CODE" id="91857CE7">
    <property type="entry name" value="Nucleolus"/>
</dbReference>
<dbReference type="CD-CODE" id="984F3092">
    <property type="entry name" value="Synthetic Condensate 000063"/>
</dbReference>
<dbReference type="CD-CODE" id="AF287C13">
    <property type="entry name" value="Synthetic Condensate 000326"/>
</dbReference>
<dbReference type="CD-CODE" id="DEE660B4">
    <property type="entry name" value="Stress granule"/>
</dbReference>
<dbReference type="CD-CODE" id="F5834E66">
    <property type="entry name" value="Synthetic Condensate 000310"/>
</dbReference>
<dbReference type="ChiTaRS" id="CBX1">
    <property type="organism name" value="human"/>
</dbReference>
<dbReference type="EvolutionaryTrace" id="P83916"/>
<dbReference type="GeneWiki" id="CBX1"/>
<dbReference type="GenomeRNAi" id="10951"/>
<dbReference type="Pharos" id="P83916">
    <property type="development level" value="Tbio"/>
</dbReference>
<dbReference type="PRO" id="PR:P83916"/>
<dbReference type="Proteomes" id="UP000005640">
    <property type="component" value="Chromosome 17"/>
</dbReference>
<dbReference type="RNAct" id="P83916">
    <property type="molecule type" value="protein"/>
</dbReference>
<dbReference type="Bgee" id="ENSG00000108468">
    <property type="expression patterns" value="Expressed in ganglionic eminence and 214 other cell types or tissues"/>
</dbReference>
<dbReference type="ExpressionAtlas" id="P83916">
    <property type="expression patterns" value="baseline and differential"/>
</dbReference>
<dbReference type="GO" id="GO:0000785">
    <property type="term" value="C:chromatin"/>
    <property type="evidence" value="ECO:0000314"/>
    <property type="project" value="UniProtKB"/>
</dbReference>
<dbReference type="GO" id="GO:0010369">
    <property type="term" value="C:chromocenter"/>
    <property type="evidence" value="ECO:0007669"/>
    <property type="project" value="Ensembl"/>
</dbReference>
<dbReference type="GO" id="GO:0000775">
    <property type="term" value="C:chromosome, centromeric region"/>
    <property type="evidence" value="ECO:0000314"/>
    <property type="project" value="UniProtKB"/>
</dbReference>
<dbReference type="GO" id="GO:0000781">
    <property type="term" value="C:chromosome, telomeric region"/>
    <property type="evidence" value="ECO:0007005"/>
    <property type="project" value="BHF-UCL"/>
</dbReference>
<dbReference type="GO" id="GO:0001939">
    <property type="term" value="C:female pronucleus"/>
    <property type="evidence" value="ECO:0007669"/>
    <property type="project" value="Ensembl"/>
</dbReference>
<dbReference type="GO" id="GO:0000792">
    <property type="term" value="C:heterochromatin"/>
    <property type="evidence" value="ECO:0000304"/>
    <property type="project" value="ProtInc"/>
</dbReference>
<dbReference type="GO" id="GO:0043231">
    <property type="term" value="C:intracellular membrane-bounded organelle"/>
    <property type="evidence" value="ECO:0000314"/>
    <property type="project" value="HPA"/>
</dbReference>
<dbReference type="GO" id="GO:0001940">
    <property type="term" value="C:male pronucleus"/>
    <property type="evidence" value="ECO:0007669"/>
    <property type="project" value="Ensembl"/>
</dbReference>
<dbReference type="GO" id="GO:0016604">
    <property type="term" value="C:nuclear body"/>
    <property type="evidence" value="ECO:0000314"/>
    <property type="project" value="HPA"/>
</dbReference>
<dbReference type="GO" id="GO:0005654">
    <property type="term" value="C:nucleoplasm"/>
    <property type="evidence" value="ECO:0000314"/>
    <property type="project" value="HPA"/>
</dbReference>
<dbReference type="GO" id="GO:0005634">
    <property type="term" value="C:nucleus"/>
    <property type="evidence" value="ECO:0000314"/>
    <property type="project" value="UniProtKB"/>
</dbReference>
<dbReference type="GO" id="GO:0005721">
    <property type="term" value="C:pericentric heterochromatin"/>
    <property type="evidence" value="ECO:0000318"/>
    <property type="project" value="GO_Central"/>
</dbReference>
<dbReference type="GO" id="GO:0090734">
    <property type="term" value="C:site of DNA damage"/>
    <property type="evidence" value="ECO:0000315"/>
    <property type="project" value="UniProtKB"/>
</dbReference>
<dbReference type="GO" id="GO:0005819">
    <property type="term" value="C:spindle"/>
    <property type="evidence" value="ECO:0000314"/>
    <property type="project" value="UniProtKB"/>
</dbReference>
<dbReference type="GO" id="GO:0003682">
    <property type="term" value="F:chromatin binding"/>
    <property type="evidence" value="ECO:0000318"/>
    <property type="project" value="GO_Central"/>
</dbReference>
<dbReference type="GO" id="GO:0019899">
    <property type="term" value="F:enzyme binding"/>
    <property type="evidence" value="ECO:0000353"/>
    <property type="project" value="UniProtKB"/>
</dbReference>
<dbReference type="GO" id="GO:1990226">
    <property type="term" value="F:histone methyltransferase binding"/>
    <property type="evidence" value="ECO:0000353"/>
    <property type="project" value="BHF-UCL"/>
</dbReference>
<dbReference type="GO" id="GO:0042802">
    <property type="term" value="F:identical protein binding"/>
    <property type="evidence" value="ECO:0007669"/>
    <property type="project" value="Ensembl"/>
</dbReference>
<dbReference type="GO" id="GO:0035064">
    <property type="term" value="F:methylated histone binding"/>
    <property type="evidence" value="ECO:0000318"/>
    <property type="project" value="GO_Central"/>
</dbReference>
<dbReference type="GO" id="GO:0006974">
    <property type="term" value="P:DNA damage response"/>
    <property type="evidence" value="ECO:0000315"/>
    <property type="project" value="UniProtKB"/>
</dbReference>
<dbReference type="GO" id="GO:0031507">
    <property type="term" value="P:heterochromatin formation"/>
    <property type="evidence" value="ECO:0000318"/>
    <property type="project" value="GO_Central"/>
</dbReference>
<dbReference type="GO" id="GO:0045892">
    <property type="term" value="P:negative regulation of DNA-templated transcription"/>
    <property type="evidence" value="ECO:0007669"/>
    <property type="project" value="Ensembl"/>
</dbReference>
<dbReference type="CDD" id="cd18650">
    <property type="entry name" value="CD_HP1beta_Cbx1"/>
    <property type="match status" value="1"/>
</dbReference>
<dbReference type="CDD" id="cd18654">
    <property type="entry name" value="CSD_HP1beta_Cbx1"/>
    <property type="match status" value="1"/>
</dbReference>
<dbReference type="DisProt" id="DP02856"/>
<dbReference type="FunFam" id="2.40.50.40:FF:000007">
    <property type="entry name" value="Chromobox protein homolog 1"/>
    <property type="match status" value="1"/>
</dbReference>
<dbReference type="FunFam" id="2.40.50.40:FF:000009">
    <property type="entry name" value="chromobox protein homolog 1"/>
    <property type="match status" value="1"/>
</dbReference>
<dbReference type="Gene3D" id="2.40.50.40">
    <property type="match status" value="2"/>
</dbReference>
<dbReference type="IDEAL" id="IID00275"/>
<dbReference type="InterPro" id="IPR016197">
    <property type="entry name" value="Chromo-like_dom_sf"/>
</dbReference>
<dbReference type="InterPro" id="IPR000953">
    <property type="entry name" value="Chromo/chromo_shadow_dom"/>
</dbReference>
<dbReference type="InterPro" id="IPR017984">
    <property type="entry name" value="Chromo_dom_subgr"/>
</dbReference>
<dbReference type="InterPro" id="IPR023780">
    <property type="entry name" value="Chromo_domain"/>
</dbReference>
<dbReference type="InterPro" id="IPR008251">
    <property type="entry name" value="Chromo_shadow_dom"/>
</dbReference>
<dbReference type="InterPro" id="IPR023779">
    <property type="entry name" value="Chromodomain_CS"/>
</dbReference>
<dbReference type="InterPro" id="IPR051219">
    <property type="entry name" value="Heterochromatin_chromo-domain"/>
</dbReference>
<dbReference type="PANTHER" id="PTHR22812">
    <property type="entry name" value="CHROMOBOX PROTEIN"/>
    <property type="match status" value="1"/>
</dbReference>
<dbReference type="Pfam" id="PF00385">
    <property type="entry name" value="Chromo"/>
    <property type="match status" value="1"/>
</dbReference>
<dbReference type="Pfam" id="PF01393">
    <property type="entry name" value="Chromo_shadow"/>
    <property type="match status" value="1"/>
</dbReference>
<dbReference type="PRINTS" id="PR00504">
    <property type="entry name" value="CHROMODOMAIN"/>
</dbReference>
<dbReference type="SMART" id="SM00298">
    <property type="entry name" value="CHROMO"/>
    <property type="match status" value="2"/>
</dbReference>
<dbReference type="SMART" id="SM00300">
    <property type="entry name" value="ChSh"/>
    <property type="match status" value="1"/>
</dbReference>
<dbReference type="SUPFAM" id="SSF54160">
    <property type="entry name" value="Chromo domain-like"/>
    <property type="match status" value="2"/>
</dbReference>
<dbReference type="PROSITE" id="PS00598">
    <property type="entry name" value="CHROMO_1"/>
    <property type="match status" value="1"/>
</dbReference>
<dbReference type="PROSITE" id="PS50013">
    <property type="entry name" value="CHROMO_2"/>
    <property type="match status" value="2"/>
</dbReference>
<gene>
    <name type="primary">CBX1</name>
    <name type="synonym">CBX</name>
</gene>